<evidence type="ECO:0000255" key="1">
    <source>
        <dbReference type="HAMAP-Rule" id="MF_00199"/>
    </source>
</evidence>
<keyword id="KW-0378">Hydrolase</keyword>
<feature type="chain" id="PRO_1000012066" description="Bis(5'-nucleosyl)-tetraphosphatase, symmetrical">
    <location>
        <begin position="1"/>
        <end position="274"/>
    </location>
</feature>
<accession>A6T287</accession>
<proteinExistence type="inferred from homology"/>
<gene>
    <name evidence="1" type="primary">apaH</name>
    <name type="ordered locus">mma_2944</name>
</gene>
<dbReference type="EC" id="3.6.1.41" evidence="1"/>
<dbReference type="EMBL" id="CP000269">
    <property type="protein sequence ID" value="ABR90619.1"/>
    <property type="molecule type" value="Genomic_DNA"/>
</dbReference>
<dbReference type="RefSeq" id="WP_012080793.1">
    <property type="nucleotide sequence ID" value="NC_009659.1"/>
</dbReference>
<dbReference type="SMR" id="A6T287"/>
<dbReference type="STRING" id="375286.mma_2944"/>
<dbReference type="KEGG" id="mms:mma_2944"/>
<dbReference type="eggNOG" id="COG0639">
    <property type="taxonomic scope" value="Bacteria"/>
</dbReference>
<dbReference type="HOGENOM" id="CLU_056184_1_0_4"/>
<dbReference type="OrthoDB" id="9807890at2"/>
<dbReference type="Proteomes" id="UP000006388">
    <property type="component" value="Chromosome"/>
</dbReference>
<dbReference type="GO" id="GO:0008803">
    <property type="term" value="F:bis(5'-nucleosyl)-tetraphosphatase (symmetrical) activity"/>
    <property type="evidence" value="ECO:0007669"/>
    <property type="project" value="UniProtKB-UniRule"/>
</dbReference>
<dbReference type="CDD" id="cd07422">
    <property type="entry name" value="MPP_ApaH"/>
    <property type="match status" value="1"/>
</dbReference>
<dbReference type="Gene3D" id="3.60.21.10">
    <property type="match status" value="1"/>
</dbReference>
<dbReference type="HAMAP" id="MF_00199">
    <property type="entry name" value="ApaH"/>
    <property type="match status" value="1"/>
</dbReference>
<dbReference type="InterPro" id="IPR004617">
    <property type="entry name" value="ApaH"/>
</dbReference>
<dbReference type="InterPro" id="IPR004843">
    <property type="entry name" value="Calcineurin-like_PHP_ApaH"/>
</dbReference>
<dbReference type="InterPro" id="IPR029052">
    <property type="entry name" value="Metallo-depent_PP-like"/>
</dbReference>
<dbReference type="NCBIfam" id="TIGR00668">
    <property type="entry name" value="apaH"/>
    <property type="match status" value="1"/>
</dbReference>
<dbReference type="NCBIfam" id="NF001204">
    <property type="entry name" value="PRK00166.1"/>
    <property type="match status" value="1"/>
</dbReference>
<dbReference type="PANTHER" id="PTHR40942">
    <property type="match status" value="1"/>
</dbReference>
<dbReference type="PANTHER" id="PTHR40942:SF4">
    <property type="entry name" value="CYTOCHROME C5"/>
    <property type="match status" value="1"/>
</dbReference>
<dbReference type="Pfam" id="PF00149">
    <property type="entry name" value="Metallophos"/>
    <property type="match status" value="1"/>
</dbReference>
<dbReference type="PIRSF" id="PIRSF000903">
    <property type="entry name" value="B5n-ttraPtase_sm"/>
    <property type="match status" value="1"/>
</dbReference>
<dbReference type="SUPFAM" id="SSF56300">
    <property type="entry name" value="Metallo-dependent phosphatases"/>
    <property type="match status" value="1"/>
</dbReference>
<sequence>MTTYAIGDLQGCQTQLNDLLQKIDAVAPQAQLVFVGDIVNRGPRSLATLRQVRALGQRARIVLGNHDLNLLAIACGLRKPHASDTVDDIMAADDRDELIDWLRHQPLALARDNHLFVHAGVLPQWSAAQTVALSREVEAVLQGPDWVAFLQKMYGNEPSLWDDSLQGDDRLRCIVNALTRIRFCQADGRMDFKAVESLAHTPAGLMPWFDAPDRRSTDTTVVFGHWSTLGLMVLPNVIGLDTGCVWGGQLTAMNLTDRTTIQVKCPQHQKPGKN</sequence>
<reference key="1">
    <citation type="journal article" date="2007" name="PLoS Genet.">
        <title>Genome analysis of Minibacterium massiliensis highlights the convergent evolution of water-living bacteria.</title>
        <authorList>
            <person name="Audic S."/>
            <person name="Robert C."/>
            <person name="Campagna B."/>
            <person name="Parinello H."/>
            <person name="Claverie J.-M."/>
            <person name="Raoult D."/>
            <person name="Drancourt M."/>
        </authorList>
    </citation>
    <scope>NUCLEOTIDE SEQUENCE [LARGE SCALE GENOMIC DNA]</scope>
    <source>
        <strain>Marseille</strain>
    </source>
</reference>
<protein>
    <recommendedName>
        <fullName evidence="1">Bis(5'-nucleosyl)-tetraphosphatase, symmetrical</fullName>
        <ecNumber evidence="1">3.6.1.41</ecNumber>
    </recommendedName>
    <alternativeName>
        <fullName evidence="1">Ap4A hydrolase</fullName>
    </alternativeName>
    <alternativeName>
        <fullName evidence="1">Diadenosine 5',5'''-P1,P4-tetraphosphate pyrophosphohydrolase</fullName>
    </alternativeName>
    <alternativeName>
        <fullName evidence="1">Diadenosine tetraphosphatase</fullName>
    </alternativeName>
</protein>
<organism>
    <name type="scientific">Janthinobacterium sp. (strain Marseille)</name>
    <name type="common">Minibacterium massiliensis</name>
    <dbReference type="NCBI Taxonomy" id="375286"/>
    <lineage>
        <taxon>Bacteria</taxon>
        <taxon>Pseudomonadati</taxon>
        <taxon>Pseudomonadota</taxon>
        <taxon>Betaproteobacteria</taxon>
        <taxon>Burkholderiales</taxon>
        <taxon>Oxalobacteraceae</taxon>
        <taxon>Janthinobacterium</taxon>
    </lineage>
</organism>
<name>APAH_JANMA</name>
<comment type="function">
    <text evidence="1">Hydrolyzes diadenosine 5',5'''-P1,P4-tetraphosphate to yield ADP.</text>
</comment>
<comment type="catalytic activity">
    <reaction evidence="1">
        <text>P(1),P(4)-bis(5'-adenosyl) tetraphosphate + H2O = 2 ADP + 2 H(+)</text>
        <dbReference type="Rhea" id="RHEA:24252"/>
        <dbReference type="ChEBI" id="CHEBI:15377"/>
        <dbReference type="ChEBI" id="CHEBI:15378"/>
        <dbReference type="ChEBI" id="CHEBI:58141"/>
        <dbReference type="ChEBI" id="CHEBI:456216"/>
        <dbReference type="EC" id="3.6.1.41"/>
    </reaction>
</comment>
<comment type="similarity">
    <text evidence="1">Belongs to the Ap4A hydrolase family.</text>
</comment>